<organism>
    <name type="scientific">Mycoplasma pneumoniae (strain ATCC 29342 / M129 / Subtype 1)</name>
    <name type="common">Mycoplasmoides pneumoniae</name>
    <dbReference type="NCBI Taxonomy" id="272634"/>
    <lineage>
        <taxon>Bacteria</taxon>
        <taxon>Bacillati</taxon>
        <taxon>Mycoplasmatota</taxon>
        <taxon>Mycoplasmoidales</taxon>
        <taxon>Mycoplasmoidaceae</taxon>
        <taxon>Mycoplasmoides</taxon>
    </lineage>
</organism>
<proteinExistence type="predicted"/>
<feature type="chain" id="PRO_0000210672" description="Uncharacterized protein MPN_407">
    <location>
        <begin position="1"/>
        <end position="879"/>
    </location>
</feature>
<feature type="transmembrane region" description="Helical" evidence="1">
    <location>
        <begin position="14"/>
        <end position="34"/>
    </location>
</feature>
<gene>
    <name type="ordered locus">MPN_407</name>
    <name type="ORF">F11_orf879</name>
    <name type="ORF">MP431</name>
</gene>
<sequence>MKKRTKYRYWLNSLAFFGCGVSVGAFFTLFLMGTQSDVSPLFVKNINIQLPSSTHQQKIEPLNLPTNISKTEIASWGSEFQSKVLDFYARDGEEHDNKIRYQLPSLSFAWTGGKELVSDFARLHGARNFVAYFDQYWRFWSNPNWPAGQVDRVDVLCEWNSDKQTISDINFSDQFVFASARFEGKIANFGFAGQTMKDINESFQERVLSIYKPRTLVYLTSQADAERVDYYEEFVNNLTALIKKQVGEKAEKDNFFILQLHWKTNDSAFNEKLSVLNFVALATVKQLTDQNRNFASKIKVVDHFEGDFVPSDWLSGNYLSEDKVSLSLQGEFAIGKQLAQVLKATGAEPLPVEVTEPSLEAIPINEETQFDVKNYYSFGHYHDTNVINDRIDFDDPNYNLETDFFNNAKANLVTTSNPFTVTWKTKTKELEIESTEVNPNGLQYQLSFASDFNARDIKKRPTSYLRWNGTITNKQIDISLYWKYIHKALDIKENEPLNYLLQITRTDGQGSYQVINGWINKEKDNTPTIFDFLKDKTQANWLFIGDSMTHGVGTDGYSSAPQLLEQSLKNDFGRYRDVVINSAINGSNTSLELYMQNHRFKQYKNIDVYVLNLGTNDINQLAQGVYTVEQYKHNLTQILDLLHTQSPQAHVVLANIAPSSLLRSSEKNWKTFNDFLEGIPKDSNYSSFVHLLDQKSLFLQLAKVSGIDINENKLFNTDFLKKSFYFADKFSHLSVNGNVEYMRNILTTVGFDWQNSAFASLGYLSFGYLKKPATVVELPEVTVDDQTGVLDIKQSVPPKLKVNKQGFEPVFITFTNTNNNEQVTVVLNNWSQWETHKTDFAPWLKCKHWNIDVKQIRRVKTTFRDQENANFFELIESKQ</sequence>
<name>Y407_MYCPN</name>
<evidence type="ECO:0000255" key="1"/>
<evidence type="ECO:0000305" key="2"/>
<keyword id="KW-0472">Membrane</keyword>
<keyword id="KW-1185">Reference proteome</keyword>
<keyword id="KW-0812">Transmembrane</keyword>
<keyword id="KW-1133">Transmembrane helix</keyword>
<comment type="subcellular location">
    <subcellularLocation>
        <location evidence="2">Membrane</location>
        <topology evidence="2">Single-pass membrane protein</topology>
    </subcellularLocation>
</comment>
<dbReference type="EMBL" id="U00089">
    <property type="protein sequence ID" value="AAB96079.1"/>
    <property type="molecule type" value="Genomic_DNA"/>
</dbReference>
<dbReference type="PIR" id="S73757">
    <property type="entry name" value="S73757"/>
</dbReference>
<dbReference type="RefSeq" id="NP_110095.1">
    <property type="nucleotide sequence ID" value="NC_000912.1"/>
</dbReference>
<dbReference type="RefSeq" id="WP_010874763.1">
    <property type="nucleotide sequence ID" value="NC_000912.1"/>
</dbReference>
<dbReference type="SMR" id="P75377"/>
<dbReference type="IntAct" id="P75377">
    <property type="interactions" value="1"/>
</dbReference>
<dbReference type="STRING" id="272634.MPN_407"/>
<dbReference type="EnsemblBacteria" id="AAB96079">
    <property type="protein sequence ID" value="AAB96079"/>
    <property type="gene ID" value="MPN_407"/>
</dbReference>
<dbReference type="KEGG" id="mpn:MPN_407"/>
<dbReference type="PATRIC" id="fig|272634.6.peg.440"/>
<dbReference type="HOGENOM" id="CLU_359348_0_0_14"/>
<dbReference type="OrthoDB" id="9805821at2"/>
<dbReference type="BioCyc" id="MPNE272634:G1GJ3-653-MONOMER"/>
<dbReference type="Proteomes" id="UP000000808">
    <property type="component" value="Chromosome"/>
</dbReference>
<dbReference type="GO" id="GO:0016020">
    <property type="term" value="C:membrane"/>
    <property type="evidence" value="ECO:0007669"/>
    <property type="project" value="UniProtKB-SubCell"/>
</dbReference>
<dbReference type="GO" id="GO:0004622">
    <property type="term" value="F:lysophospholipase activity"/>
    <property type="evidence" value="ECO:0007669"/>
    <property type="project" value="TreeGrafter"/>
</dbReference>
<dbReference type="CDD" id="cd00229">
    <property type="entry name" value="SGNH_hydrolase"/>
    <property type="match status" value="1"/>
</dbReference>
<dbReference type="Gene3D" id="3.40.50.1110">
    <property type="entry name" value="SGNH hydrolase"/>
    <property type="match status" value="2"/>
</dbReference>
<dbReference type="InterPro" id="IPR051532">
    <property type="entry name" value="Ester_Hydrolysis_Enzymes"/>
</dbReference>
<dbReference type="InterPro" id="IPR013830">
    <property type="entry name" value="SGNH_hydro"/>
</dbReference>
<dbReference type="InterPro" id="IPR036514">
    <property type="entry name" value="SGNH_hydro_sf"/>
</dbReference>
<dbReference type="PANTHER" id="PTHR30383:SF5">
    <property type="entry name" value="SGNH HYDROLASE-TYPE ESTERASE DOMAIN-CONTAINING PROTEIN"/>
    <property type="match status" value="1"/>
</dbReference>
<dbReference type="PANTHER" id="PTHR30383">
    <property type="entry name" value="THIOESTERASE 1/PROTEASE 1/LYSOPHOSPHOLIPASE L1"/>
    <property type="match status" value="1"/>
</dbReference>
<dbReference type="Pfam" id="PF13472">
    <property type="entry name" value="Lipase_GDSL_2"/>
    <property type="match status" value="1"/>
</dbReference>
<dbReference type="SUPFAM" id="SSF52266">
    <property type="entry name" value="SGNH hydrolase"/>
    <property type="match status" value="1"/>
</dbReference>
<dbReference type="PROSITE" id="PS51257">
    <property type="entry name" value="PROKAR_LIPOPROTEIN"/>
    <property type="match status" value="1"/>
</dbReference>
<protein>
    <recommendedName>
        <fullName>Uncharacterized protein MPN_407</fullName>
    </recommendedName>
</protein>
<reference key="1">
    <citation type="journal article" date="1996" name="Nucleic Acids Res.">
        <title>Complete sequence analysis of the genome of the bacterium Mycoplasma pneumoniae.</title>
        <authorList>
            <person name="Himmelreich R."/>
            <person name="Hilbert H."/>
            <person name="Plagens H."/>
            <person name="Pirkl E."/>
            <person name="Li B.-C."/>
            <person name="Herrmann R."/>
        </authorList>
    </citation>
    <scope>NUCLEOTIDE SEQUENCE [LARGE SCALE GENOMIC DNA]</scope>
    <source>
        <strain>ATCC 29342 / M129 / Subtype 1</strain>
    </source>
</reference>
<accession>P75377</accession>